<protein>
    <recommendedName>
        <fullName>Putative 4-hydroxy-4-methyl-2-oxoglutarate aldolase</fullName>
        <shortName>HMG aldolase</shortName>
        <ecNumber>4.1.3.17</ecNumber>
    </recommendedName>
    <alternativeName>
        <fullName>Oxaloacetate decarboxylase</fullName>
        <shortName>OAA decarboxylase</shortName>
        <ecNumber>4.1.1.112</ecNumber>
    </alternativeName>
    <alternativeName>
        <fullName>Regulator of ribonuclease activity homolog</fullName>
    </alternativeName>
    <alternativeName>
        <fullName>RraA-like protein</fullName>
    </alternativeName>
</protein>
<dbReference type="EC" id="4.1.3.17"/>
<dbReference type="EC" id="4.1.1.112"/>
<dbReference type="EMBL" id="CR543861">
    <property type="protein sequence ID" value="CAG68257.1"/>
    <property type="molecule type" value="Genomic_DNA"/>
</dbReference>
<dbReference type="SMR" id="Q6FCF4"/>
<dbReference type="STRING" id="202950.GCA_001485005_01148"/>
<dbReference type="GeneID" id="45233806"/>
<dbReference type="KEGG" id="aci:ACIAD1391"/>
<dbReference type="eggNOG" id="COG0684">
    <property type="taxonomic scope" value="Bacteria"/>
</dbReference>
<dbReference type="HOGENOM" id="CLU_072626_4_0_6"/>
<dbReference type="OrthoDB" id="943692at2"/>
<dbReference type="BioCyc" id="ASP62977:ACIAD_RS06420-MONOMER"/>
<dbReference type="Proteomes" id="UP000000430">
    <property type="component" value="Chromosome"/>
</dbReference>
<dbReference type="GO" id="GO:0047443">
    <property type="term" value="F:4-hydroxy-4-methyl-2-oxoglutarate aldolase activity"/>
    <property type="evidence" value="ECO:0007669"/>
    <property type="project" value="UniProtKB-EC"/>
</dbReference>
<dbReference type="GO" id="GO:0046872">
    <property type="term" value="F:metal ion binding"/>
    <property type="evidence" value="ECO:0007669"/>
    <property type="project" value="UniProtKB-KW"/>
</dbReference>
<dbReference type="GO" id="GO:0008948">
    <property type="term" value="F:oxaloacetate decarboxylase activity"/>
    <property type="evidence" value="ECO:0007669"/>
    <property type="project" value="UniProtKB-EC"/>
</dbReference>
<dbReference type="GO" id="GO:0008428">
    <property type="term" value="F:ribonuclease inhibitor activity"/>
    <property type="evidence" value="ECO:0007669"/>
    <property type="project" value="InterPro"/>
</dbReference>
<dbReference type="GO" id="GO:0051252">
    <property type="term" value="P:regulation of RNA metabolic process"/>
    <property type="evidence" value="ECO:0007669"/>
    <property type="project" value="InterPro"/>
</dbReference>
<dbReference type="CDD" id="cd16841">
    <property type="entry name" value="RraA_family"/>
    <property type="match status" value="1"/>
</dbReference>
<dbReference type="Gene3D" id="3.50.30.40">
    <property type="entry name" value="Ribonuclease E inhibitor RraA/RraA-like"/>
    <property type="match status" value="1"/>
</dbReference>
<dbReference type="InterPro" id="IPR010203">
    <property type="entry name" value="RraA"/>
</dbReference>
<dbReference type="InterPro" id="IPR005493">
    <property type="entry name" value="RraA/RraA-like"/>
</dbReference>
<dbReference type="InterPro" id="IPR036704">
    <property type="entry name" value="RraA/RraA-like_sf"/>
</dbReference>
<dbReference type="NCBIfam" id="TIGR01935">
    <property type="entry name" value="NOT-MenG"/>
    <property type="match status" value="1"/>
</dbReference>
<dbReference type="NCBIfam" id="NF006875">
    <property type="entry name" value="PRK09372.1"/>
    <property type="match status" value="1"/>
</dbReference>
<dbReference type="NCBIfam" id="NF009134">
    <property type="entry name" value="PRK12487.1"/>
    <property type="match status" value="1"/>
</dbReference>
<dbReference type="PANTHER" id="PTHR33254">
    <property type="entry name" value="4-HYDROXY-4-METHYL-2-OXOGLUTARATE ALDOLASE 3-RELATED"/>
    <property type="match status" value="1"/>
</dbReference>
<dbReference type="PANTHER" id="PTHR33254:SF4">
    <property type="entry name" value="4-HYDROXY-4-METHYL-2-OXOGLUTARATE ALDOLASE 3-RELATED"/>
    <property type="match status" value="1"/>
</dbReference>
<dbReference type="Pfam" id="PF03737">
    <property type="entry name" value="RraA-like"/>
    <property type="match status" value="1"/>
</dbReference>
<dbReference type="SUPFAM" id="SSF89562">
    <property type="entry name" value="RraA-like"/>
    <property type="match status" value="1"/>
</dbReference>
<accession>Q6FCF4</accession>
<comment type="function">
    <text evidence="1">Catalyzes the aldol cleavage of 4-hydroxy-4-methyl-2-oxoglutarate (HMG) into 2 molecules of pyruvate. Also contains a secondary oxaloacetate (OAA) decarboxylase activity due to the common pyruvate enolate transition state formed following C-C bond cleavage in the retro-aldol and decarboxylation reactions (By similarity).</text>
</comment>
<comment type="catalytic activity">
    <reaction>
        <text>4-hydroxy-4-methyl-2-oxoglutarate = 2 pyruvate</text>
        <dbReference type="Rhea" id="RHEA:22748"/>
        <dbReference type="ChEBI" id="CHEBI:15361"/>
        <dbReference type="ChEBI" id="CHEBI:58276"/>
        <dbReference type="EC" id="4.1.3.17"/>
    </reaction>
</comment>
<comment type="catalytic activity">
    <reaction>
        <text>oxaloacetate + H(+) = pyruvate + CO2</text>
        <dbReference type="Rhea" id="RHEA:15641"/>
        <dbReference type="ChEBI" id="CHEBI:15361"/>
        <dbReference type="ChEBI" id="CHEBI:15378"/>
        <dbReference type="ChEBI" id="CHEBI:16452"/>
        <dbReference type="ChEBI" id="CHEBI:16526"/>
        <dbReference type="EC" id="4.1.1.112"/>
    </reaction>
</comment>
<comment type="cofactor">
    <cofactor evidence="1">
        <name>a divalent metal cation</name>
        <dbReference type="ChEBI" id="CHEBI:60240"/>
    </cofactor>
    <text evidence="1">Divalent metal cation.</text>
</comment>
<comment type="subunit">
    <text evidence="1">Homotrimer.</text>
</comment>
<comment type="similarity">
    <text evidence="2">Belongs to the class II aldolase/RraA-like family.</text>
</comment>
<evidence type="ECO:0000250" key="1"/>
<evidence type="ECO:0000305" key="2"/>
<reference key="1">
    <citation type="journal article" date="2004" name="Nucleic Acids Res.">
        <title>Unique features revealed by the genome sequence of Acinetobacter sp. ADP1, a versatile and naturally transformation competent bacterium.</title>
        <authorList>
            <person name="Barbe V."/>
            <person name="Vallenet D."/>
            <person name="Fonknechten N."/>
            <person name="Kreimeyer A."/>
            <person name="Oztas S."/>
            <person name="Labarre L."/>
            <person name="Cruveiller S."/>
            <person name="Robert C."/>
            <person name="Duprat S."/>
            <person name="Wincker P."/>
            <person name="Ornston L.N."/>
            <person name="Weissenbach J."/>
            <person name="Marliere P."/>
            <person name="Cohen G.N."/>
            <person name="Medigue C."/>
        </authorList>
    </citation>
    <scope>NUCLEOTIDE SEQUENCE [LARGE SCALE GENOMIC DNA]</scope>
    <source>
        <strain>ATCC 33305 / BD413 / ADP1</strain>
    </source>
</reference>
<proteinExistence type="inferred from homology"/>
<keyword id="KW-0456">Lyase</keyword>
<keyword id="KW-0479">Metal-binding</keyword>
<organism>
    <name type="scientific">Acinetobacter baylyi (strain ATCC 33305 / BD413 / ADP1)</name>
    <dbReference type="NCBI Taxonomy" id="62977"/>
    <lineage>
        <taxon>Bacteria</taxon>
        <taxon>Pseudomonadati</taxon>
        <taxon>Pseudomonadota</taxon>
        <taxon>Gammaproteobacteria</taxon>
        <taxon>Moraxellales</taxon>
        <taxon>Moraxellaceae</taxon>
        <taxon>Acinetobacter</taxon>
    </lineage>
</organism>
<feature type="chain" id="PRO_0000209601" description="Putative 4-hydroxy-4-methyl-2-oxoglutarate aldolase">
    <location>
        <begin position="1"/>
        <end position="170"/>
    </location>
</feature>
<feature type="binding site" evidence="1">
    <location>
        <begin position="85"/>
        <end position="88"/>
    </location>
    <ligand>
        <name>substrate</name>
    </ligand>
</feature>
<feature type="binding site" evidence="1">
    <location>
        <position position="107"/>
    </location>
    <ligand>
        <name>substrate</name>
    </ligand>
</feature>
<feature type="binding site" evidence="1">
    <location>
        <position position="108"/>
    </location>
    <ligand>
        <name>a divalent metal cation</name>
        <dbReference type="ChEBI" id="CHEBI:60240"/>
    </ligand>
</feature>
<sequence length="170" mass="18401">MTTTVPFVTCDLLDDHTDKDIQVLTPSLDGRFFKSYGARKIFSGQIVTVKCFEDNSRVKELLATDGTGKVLVVDGGASMRCALMGDMIAESAVKYHWDGVVIYGCIRDVDALAELDLGIHALAAIPQKSNRQGIGEVGVNLYFGGVTFQAGCYIYADNNGIIVSKQKLID</sequence>
<name>RRAAH_ACIAD</name>
<gene>
    <name type="ordered locus">ACIAD1391</name>
</gene>